<keyword id="KW-0256">Endoplasmic reticulum</keyword>
<keyword id="KW-0472">Membrane</keyword>
<keyword id="KW-1185">Reference proteome</keyword>
<keyword id="KW-0812">Transmembrane</keyword>
<keyword id="KW-1133">Transmembrane helix</keyword>
<reference key="1">
    <citation type="journal article" date="2002" name="Nature">
        <title>The genome sequence of Schizosaccharomyces pombe.</title>
        <authorList>
            <person name="Wood V."/>
            <person name="Gwilliam R."/>
            <person name="Rajandream M.A."/>
            <person name="Lyne M.H."/>
            <person name="Lyne R."/>
            <person name="Stewart A."/>
            <person name="Sgouros J.G."/>
            <person name="Peat N."/>
            <person name="Hayles J."/>
            <person name="Baker S.G."/>
            <person name="Basham D."/>
            <person name="Bowman S."/>
            <person name="Brooks K."/>
            <person name="Brown D."/>
            <person name="Brown S."/>
            <person name="Chillingworth T."/>
            <person name="Churcher C.M."/>
            <person name="Collins M."/>
            <person name="Connor R."/>
            <person name="Cronin A."/>
            <person name="Davis P."/>
            <person name="Feltwell T."/>
            <person name="Fraser A."/>
            <person name="Gentles S."/>
            <person name="Goble A."/>
            <person name="Hamlin N."/>
            <person name="Harris D.E."/>
            <person name="Hidalgo J."/>
            <person name="Hodgson G."/>
            <person name="Holroyd S."/>
            <person name="Hornsby T."/>
            <person name="Howarth S."/>
            <person name="Huckle E.J."/>
            <person name="Hunt S."/>
            <person name="Jagels K."/>
            <person name="James K.D."/>
            <person name="Jones L."/>
            <person name="Jones M."/>
            <person name="Leather S."/>
            <person name="McDonald S."/>
            <person name="McLean J."/>
            <person name="Mooney P."/>
            <person name="Moule S."/>
            <person name="Mungall K.L."/>
            <person name="Murphy L.D."/>
            <person name="Niblett D."/>
            <person name="Odell C."/>
            <person name="Oliver K."/>
            <person name="O'Neil S."/>
            <person name="Pearson D."/>
            <person name="Quail M.A."/>
            <person name="Rabbinowitsch E."/>
            <person name="Rutherford K.M."/>
            <person name="Rutter S."/>
            <person name="Saunders D."/>
            <person name="Seeger K."/>
            <person name="Sharp S."/>
            <person name="Skelton J."/>
            <person name="Simmonds M.N."/>
            <person name="Squares R."/>
            <person name="Squares S."/>
            <person name="Stevens K."/>
            <person name="Taylor K."/>
            <person name="Taylor R.G."/>
            <person name="Tivey A."/>
            <person name="Walsh S.V."/>
            <person name="Warren T."/>
            <person name="Whitehead S."/>
            <person name="Woodward J.R."/>
            <person name="Volckaert G."/>
            <person name="Aert R."/>
            <person name="Robben J."/>
            <person name="Grymonprez B."/>
            <person name="Weltjens I."/>
            <person name="Vanstreels E."/>
            <person name="Rieger M."/>
            <person name="Schaefer M."/>
            <person name="Mueller-Auer S."/>
            <person name="Gabel C."/>
            <person name="Fuchs M."/>
            <person name="Duesterhoeft A."/>
            <person name="Fritzc C."/>
            <person name="Holzer E."/>
            <person name="Moestl D."/>
            <person name="Hilbert H."/>
            <person name="Borzym K."/>
            <person name="Langer I."/>
            <person name="Beck A."/>
            <person name="Lehrach H."/>
            <person name="Reinhardt R."/>
            <person name="Pohl T.M."/>
            <person name="Eger P."/>
            <person name="Zimmermann W."/>
            <person name="Wedler H."/>
            <person name="Wambutt R."/>
            <person name="Purnelle B."/>
            <person name="Goffeau A."/>
            <person name="Cadieu E."/>
            <person name="Dreano S."/>
            <person name="Gloux S."/>
            <person name="Lelaure V."/>
            <person name="Mottier S."/>
            <person name="Galibert F."/>
            <person name="Aves S.J."/>
            <person name="Xiang Z."/>
            <person name="Hunt C."/>
            <person name="Moore K."/>
            <person name="Hurst S.M."/>
            <person name="Lucas M."/>
            <person name="Rochet M."/>
            <person name="Gaillardin C."/>
            <person name="Tallada V.A."/>
            <person name="Garzon A."/>
            <person name="Thode G."/>
            <person name="Daga R.R."/>
            <person name="Cruzado L."/>
            <person name="Jimenez J."/>
            <person name="Sanchez M."/>
            <person name="del Rey F."/>
            <person name="Benito J."/>
            <person name="Dominguez A."/>
            <person name="Revuelta J.L."/>
            <person name="Moreno S."/>
            <person name="Armstrong J."/>
            <person name="Forsburg S.L."/>
            <person name="Cerutti L."/>
            <person name="Lowe T."/>
            <person name="McCombie W.R."/>
            <person name="Paulsen I."/>
            <person name="Potashkin J."/>
            <person name="Shpakovski G.V."/>
            <person name="Ussery D."/>
            <person name="Barrell B.G."/>
            <person name="Nurse P."/>
        </authorList>
    </citation>
    <scope>NUCLEOTIDE SEQUENCE [LARGE SCALE GENOMIC DNA]</scope>
    <source>
        <strain>972 / ATCC 24843</strain>
    </source>
</reference>
<gene>
    <name type="primary">eos1</name>
    <name type="ORF">SPAPB17E12.08</name>
</gene>
<evidence type="ECO:0000250" key="1"/>
<evidence type="ECO:0000255" key="2"/>
<evidence type="ECO:0000305" key="3"/>
<dbReference type="EMBL" id="CU329670">
    <property type="protein sequence ID" value="CAD27501.3"/>
    <property type="molecule type" value="Genomic_DNA"/>
</dbReference>
<dbReference type="RefSeq" id="NP_001018223.3">
    <property type="nucleotide sequence ID" value="NM_001018703.3"/>
</dbReference>
<dbReference type="BioGRID" id="280475">
    <property type="interactions" value="2"/>
</dbReference>
<dbReference type="FunCoup" id="Q8TFH6">
    <property type="interactions" value="64"/>
</dbReference>
<dbReference type="PaxDb" id="4896-SPAPB17E12.08.1"/>
<dbReference type="EnsemblFungi" id="SPAPB17E12.08.1">
    <property type="protein sequence ID" value="SPAPB17E12.08.1:pep"/>
    <property type="gene ID" value="SPAPB17E12.08"/>
</dbReference>
<dbReference type="GeneID" id="3361399"/>
<dbReference type="KEGG" id="spo:3361399"/>
<dbReference type="PomBase" id="SPAPB17E12.08">
    <property type="gene designation" value="eos1"/>
</dbReference>
<dbReference type="VEuPathDB" id="FungiDB:SPAPB17E12.08"/>
<dbReference type="eggNOG" id="ENOG502QTWB">
    <property type="taxonomic scope" value="Eukaryota"/>
</dbReference>
<dbReference type="HOGENOM" id="CLU_043059_1_0_1"/>
<dbReference type="InParanoid" id="Q8TFH6"/>
<dbReference type="OMA" id="WIAISCF"/>
<dbReference type="PhylomeDB" id="Q8TFH6"/>
<dbReference type="PRO" id="PR:Q8TFH6"/>
<dbReference type="Proteomes" id="UP000002485">
    <property type="component" value="Chromosome I"/>
</dbReference>
<dbReference type="GO" id="GO:0005789">
    <property type="term" value="C:endoplasmic reticulum membrane"/>
    <property type="evidence" value="ECO:0000318"/>
    <property type="project" value="GO_Central"/>
</dbReference>
<dbReference type="GO" id="GO:0034599">
    <property type="term" value="P:cellular response to oxidative stress"/>
    <property type="evidence" value="ECO:0007669"/>
    <property type="project" value="InterPro"/>
</dbReference>
<dbReference type="GO" id="GO:0006487">
    <property type="term" value="P:protein N-linked glycosylation"/>
    <property type="evidence" value="ECO:0000318"/>
    <property type="project" value="GO_Central"/>
</dbReference>
<dbReference type="InterPro" id="IPR021100">
    <property type="entry name" value="N-glycosylation_EOS1"/>
</dbReference>
<dbReference type="PANTHER" id="PTHR28147">
    <property type="entry name" value="N-GLYCOSYLATION PROTEIN EOS1"/>
    <property type="match status" value="1"/>
</dbReference>
<dbReference type="PANTHER" id="PTHR28147:SF1">
    <property type="entry name" value="N-GLYCOSYLATION PROTEIN EOS1"/>
    <property type="match status" value="1"/>
</dbReference>
<dbReference type="Pfam" id="PF12326">
    <property type="entry name" value="EOS1"/>
    <property type="match status" value="1"/>
</dbReference>
<dbReference type="PRINTS" id="PR02070">
    <property type="entry name" value="NGLYCOSEOS1"/>
</dbReference>
<comment type="function">
    <text evidence="1">Involved in N-glycosylation.</text>
</comment>
<comment type="subcellular location">
    <subcellularLocation>
        <location evidence="1">Endoplasmic reticulum membrane</location>
        <topology evidence="1">Multi-pass membrane protein</topology>
    </subcellularLocation>
</comment>
<comment type="similarity">
    <text evidence="3">Belongs to the EOS1 family.</text>
</comment>
<name>EOS1_SCHPO</name>
<sequence>MKQYLNTVISNPRPAQALGINQPFVVFCFITSRALSFVPAIYWCFKCLHLAFVADKFKWLPLTSALWTLVSAYLSFVLANGFLLKWLIHYSIGPTIIRLFSLNVINFSFLSLSVSFITHGDNAYLLPAWIAISCFQTAAYIVQDWITSPIIRTLPFRSSSSSSSNYRHNLDFLEITVFAVVPVGIASFFTMVMLIWQLYKYPDSFLVSA</sequence>
<feature type="chain" id="PRO_0000350749" description="N-glycosylation protein eos1">
    <location>
        <begin position="1"/>
        <end position="209"/>
    </location>
</feature>
<feature type="topological domain" description="Lumenal" evidence="2">
    <location>
        <begin position="1"/>
        <end position="22"/>
    </location>
</feature>
<feature type="transmembrane region" description="Helical" evidence="2">
    <location>
        <begin position="23"/>
        <end position="45"/>
    </location>
</feature>
<feature type="topological domain" description="Cytoplasmic" evidence="2">
    <location>
        <begin position="46"/>
        <end position="63"/>
    </location>
</feature>
<feature type="transmembrane region" description="Helical" evidence="2">
    <location>
        <begin position="64"/>
        <end position="84"/>
    </location>
</feature>
<feature type="topological domain" description="Lumenal" evidence="2">
    <location>
        <begin position="85"/>
        <end position="98"/>
    </location>
</feature>
<feature type="transmembrane region" description="Helical" evidence="2">
    <location>
        <begin position="99"/>
        <end position="119"/>
    </location>
</feature>
<feature type="topological domain" description="Cytoplasmic" evidence="2">
    <location>
        <begin position="120"/>
        <end position="121"/>
    </location>
</feature>
<feature type="transmembrane region" description="Helical" evidence="2">
    <location>
        <begin position="122"/>
        <end position="142"/>
    </location>
</feature>
<feature type="topological domain" description="Lumenal" evidence="2">
    <location>
        <begin position="143"/>
        <end position="174"/>
    </location>
</feature>
<feature type="transmembrane region" description="Helical" evidence="2">
    <location>
        <begin position="175"/>
        <end position="195"/>
    </location>
</feature>
<feature type="topological domain" description="Cytoplasmic" evidence="2">
    <location>
        <begin position="196"/>
        <end position="209"/>
    </location>
</feature>
<proteinExistence type="inferred from homology"/>
<protein>
    <recommendedName>
        <fullName>N-glycosylation protein eos1</fullName>
    </recommendedName>
</protein>
<organism>
    <name type="scientific">Schizosaccharomyces pombe (strain 972 / ATCC 24843)</name>
    <name type="common">Fission yeast</name>
    <dbReference type="NCBI Taxonomy" id="284812"/>
    <lineage>
        <taxon>Eukaryota</taxon>
        <taxon>Fungi</taxon>
        <taxon>Dikarya</taxon>
        <taxon>Ascomycota</taxon>
        <taxon>Taphrinomycotina</taxon>
        <taxon>Schizosaccharomycetes</taxon>
        <taxon>Schizosaccharomycetales</taxon>
        <taxon>Schizosaccharomycetaceae</taxon>
        <taxon>Schizosaccharomyces</taxon>
    </lineage>
</organism>
<accession>Q8TFH6</accession>